<feature type="signal peptide" evidence="2">
    <location>
        <begin position="1"/>
        <end position="24"/>
    </location>
</feature>
<feature type="propeptide" id="PRO_0000414985" evidence="1">
    <location>
        <begin position="25"/>
        <end position="39"/>
    </location>
</feature>
<feature type="peptide" id="PRO_0000414986" description="Conotoxin Cl6.7">
    <location>
        <begin position="42"/>
        <end position="67"/>
    </location>
</feature>
<feature type="disulfide bond" evidence="1">
    <location>
        <begin position="43"/>
        <end position="58"/>
    </location>
</feature>
<feature type="disulfide bond" evidence="1">
    <location>
        <begin position="50"/>
        <end position="62"/>
    </location>
</feature>
<feature type="disulfide bond" evidence="1">
    <location>
        <begin position="57"/>
        <end position="66"/>
    </location>
</feature>
<comment type="subcellular location">
    <subcellularLocation>
        <location evidence="1">Secreted</location>
    </subcellularLocation>
</comment>
<comment type="tissue specificity">
    <text>Expressed by the venom duct.</text>
</comment>
<comment type="domain">
    <text evidence="1">The presence of a 'disulfide through disulfide knot' structurally defines this protein as a knottin.</text>
</comment>
<comment type="domain">
    <text>The cysteine framework is VI/VII (C-C-CC-C-C).</text>
</comment>
<comment type="similarity">
    <text evidence="3">Belongs to the conotoxin O1 superfamily.</text>
</comment>
<dbReference type="EMBL" id="FJ959157">
    <property type="protein sequence ID" value="ADB93127.1"/>
    <property type="molecule type" value="Genomic_DNA"/>
</dbReference>
<dbReference type="SMR" id="D6C4L5"/>
<dbReference type="ConoServer" id="4041">
    <property type="toxin name" value="Cal6.7 precursor"/>
</dbReference>
<dbReference type="GO" id="GO:0005576">
    <property type="term" value="C:extracellular region"/>
    <property type="evidence" value="ECO:0007669"/>
    <property type="project" value="UniProtKB-SubCell"/>
</dbReference>
<dbReference type="GO" id="GO:0008200">
    <property type="term" value="F:ion channel inhibitor activity"/>
    <property type="evidence" value="ECO:0007669"/>
    <property type="project" value="InterPro"/>
</dbReference>
<dbReference type="GO" id="GO:0090729">
    <property type="term" value="F:toxin activity"/>
    <property type="evidence" value="ECO:0007669"/>
    <property type="project" value="UniProtKB-KW"/>
</dbReference>
<dbReference type="InterPro" id="IPR004214">
    <property type="entry name" value="Conotoxin"/>
</dbReference>
<dbReference type="Pfam" id="PF02950">
    <property type="entry name" value="Conotoxin"/>
    <property type="match status" value="1"/>
</dbReference>
<keyword id="KW-0165">Cleavage on pair of basic residues</keyword>
<keyword id="KW-1015">Disulfide bond</keyword>
<keyword id="KW-0960">Knottin</keyword>
<keyword id="KW-0528">Neurotoxin</keyword>
<keyword id="KW-0964">Secreted</keyword>
<keyword id="KW-0732">Signal</keyword>
<keyword id="KW-0800">Toxin</keyword>
<accession>D6C4L5</accession>
<organism>
    <name type="scientific">Californiconus californicus</name>
    <name type="common">California cone</name>
    <name type="synonym">Conus californicus</name>
    <dbReference type="NCBI Taxonomy" id="1736779"/>
    <lineage>
        <taxon>Eukaryota</taxon>
        <taxon>Metazoa</taxon>
        <taxon>Spiralia</taxon>
        <taxon>Lophotrochozoa</taxon>
        <taxon>Mollusca</taxon>
        <taxon>Gastropoda</taxon>
        <taxon>Caenogastropoda</taxon>
        <taxon>Neogastropoda</taxon>
        <taxon>Conoidea</taxon>
        <taxon>Conidae</taxon>
        <taxon>Californiconus</taxon>
    </lineage>
</organism>
<sequence>MKVTAVLMVAVLVLTACQLTTANTTDYVRRIPARKSTMSRRECSESGEWCGLDPALCCGSSCFFTCN</sequence>
<protein>
    <recommendedName>
        <fullName>Conotoxin Cl6.7</fullName>
    </recommendedName>
</protein>
<name>O167_CONCL</name>
<evidence type="ECO:0000250" key="1"/>
<evidence type="ECO:0000255" key="2"/>
<evidence type="ECO:0000305" key="3"/>
<reference key="1">
    <citation type="journal article" date="2010" name="Mol. Phylogenet. Evol.">
        <title>Evolution of Conus peptide toxins: analysis of Conus californicus Reeve, 1844.</title>
        <authorList>
            <person name="Biggs J.S."/>
            <person name="Watkins M."/>
            <person name="Puillandre N."/>
            <person name="Ownby J.P."/>
            <person name="Lopez-Vera E."/>
            <person name="Christensen S."/>
            <person name="Moreno K.J."/>
            <person name="Bernaldez J."/>
            <person name="Licea-Navarro A."/>
            <person name="Corneli P.S."/>
            <person name="Olivera B.M."/>
        </authorList>
    </citation>
    <scope>NUCLEOTIDE SEQUENCE [GENOMIC DNA]</scope>
</reference>
<proteinExistence type="inferred from homology"/>